<protein>
    <recommendedName>
        <fullName evidence="1">Uridylate kinase</fullName>
        <shortName evidence="1">UK</shortName>
        <ecNumber evidence="1">2.7.4.22</ecNumber>
    </recommendedName>
    <alternativeName>
        <fullName evidence="1">Uridine monophosphate kinase</fullName>
        <shortName evidence="1">UMP kinase</shortName>
        <shortName evidence="1">UMPK</shortName>
    </alternativeName>
</protein>
<gene>
    <name evidence="1" type="primary">pyrH</name>
    <name type="ordered locus">PAE3159</name>
</gene>
<organism>
    <name type="scientific">Pyrobaculum aerophilum (strain ATCC 51768 / DSM 7523 / JCM 9630 / CIP 104966 / NBRC 100827 / IM2)</name>
    <dbReference type="NCBI Taxonomy" id="178306"/>
    <lineage>
        <taxon>Archaea</taxon>
        <taxon>Thermoproteota</taxon>
        <taxon>Thermoprotei</taxon>
        <taxon>Thermoproteales</taxon>
        <taxon>Thermoproteaceae</taxon>
        <taxon>Pyrobaculum</taxon>
    </lineage>
</organism>
<feature type="chain" id="PRO_0000143922" description="Uridylate kinase">
    <location>
        <begin position="1"/>
        <end position="217"/>
    </location>
</feature>
<feature type="binding site" evidence="1">
    <location>
        <begin position="6"/>
        <end position="10"/>
    </location>
    <ligand>
        <name>ATP</name>
        <dbReference type="ChEBI" id="CHEBI:30616"/>
    </ligand>
</feature>
<feature type="binding site" evidence="1">
    <location>
        <position position="38"/>
    </location>
    <ligand>
        <name>UMP</name>
        <dbReference type="ChEBI" id="CHEBI:57865"/>
    </ligand>
</feature>
<feature type="binding site" evidence="1">
    <location>
        <position position="39"/>
    </location>
    <ligand>
        <name>ATP</name>
        <dbReference type="ChEBI" id="CHEBI:30616"/>
    </ligand>
</feature>
<feature type="binding site" evidence="1">
    <location>
        <position position="43"/>
    </location>
    <ligand>
        <name>ATP</name>
        <dbReference type="ChEBI" id="CHEBI:30616"/>
    </ligand>
</feature>
<feature type="binding site" evidence="1">
    <location>
        <position position="60"/>
    </location>
    <ligand>
        <name>UMP</name>
        <dbReference type="ChEBI" id="CHEBI:57865"/>
    </ligand>
</feature>
<feature type="binding site" evidence="1">
    <location>
        <begin position="107"/>
        <end position="113"/>
    </location>
    <ligand>
        <name>UMP</name>
        <dbReference type="ChEBI" id="CHEBI:57865"/>
    </ligand>
</feature>
<feature type="binding site" evidence="1">
    <location>
        <position position="134"/>
    </location>
    <ligand>
        <name>ATP</name>
        <dbReference type="ChEBI" id="CHEBI:30616"/>
    </ligand>
</feature>
<feature type="binding site" evidence="1">
    <location>
        <position position="139"/>
    </location>
    <ligand>
        <name>ATP</name>
        <dbReference type="ChEBI" id="CHEBI:30616"/>
    </ligand>
</feature>
<feature type="binding site" evidence="1">
    <location>
        <position position="142"/>
    </location>
    <ligand>
        <name>ATP</name>
        <dbReference type="ChEBI" id="CHEBI:30616"/>
    </ligand>
</feature>
<comment type="function">
    <text evidence="1">Catalyzes the reversible phosphorylation of UMP to UDP.</text>
</comment>
<comment type="catalytic activity">
    <reaction evidence="1">
        <text>UMP + ATP = UDP + ADP</text>
        <dbReference type="Rhea" id="RHEA:24400"/>
        <dbReference type="ChEBI" id="CHEBI:30616"/>
        <dbReference type="ChEBI" id="CHEBI:57865"/>
        <dbReference type="ChEBI" id="CHEBI:58223"/>
        <dbReference type="ChEBI" id="CHEBI:456216"/>
        <dbReference type="EC" id="2.7.4.22"/>
    </reaction>
</comment>
<comment type="activity regulation">
    <text evidence="1">Inhibited by UTP.</text>
</comment>
<comment type="pathway">
    <text evidence="1">Pyrimidine metabolism; CTP biosynthesis via de novo pathway; UDP from UMP (UMPK route): step 1/1.</text>
</comment>
<comment type="subunit">
    <text evidence="1">Homohexamer.</text>
</comment>
<comment type="subcellular location">
    <subcellularLocation>
        <location evidence="1">Cytoplasm</location>
    </subcellularLocation>
</comment>
<comment type="similarity">
    <text evidence="1">Belongs to the UMP kinase family.</text>
</comment>
<evidence type="ECO:0000255" key="1">
    <source>
        <dbReference type="HAMAP-Rule" id="MF_01220"/>
    </source>
</evidence>
<dbReference type="EC" id="2.7.4.22" evidence="1"/>
<dbReference type="EMBL" id="AE009441">
    <property type="protein sequence ID" value="AAL64716.1"/>
    <property type="molecule type" value="Genomic_DNA"/>
</dbReference>
<dbReference type="RefSeq" id="WP_011009184.1">
    <property type="nucleotide sequence ID" value="NC_003364.1"/>
</dbReference>
<dbReference type="SMR" id="Q8ZTP3"/>
<dbReference type="FunCoup" id="Q8ZTP3">
    <property type="interactions" value="110"/>
</dbReference>
<dbReference type="STRING" id="178306.PAE3159"/>
<dbReference type="EnsemblBacteria" id="AAL64716">
    <property type="protein sequence ID" value="AAL64716"/>
    <property type="gene ID" value="PAE3159"/>
</dbReference>
<dbReference type="GeneID" id="1463895"/>
<dbReference type="KEGG" id="pai:PAE3159"/>
<dbReference type="PATRIC" id="fig|178306.9.peg.2376"/>
<dbReference type="eggNOG" id="arCOG00858">
    <property type="taxonomic scope" value="Archaea"/>
</dbReference>
<dbReference type="HOGENOM" id="CLU_079546_0_0_2"/>
<dbReference type="InParanoid" id="Q8ZTP3"/>
<dbReference type="UniPathway" id="UPA00159">
    <property type="reaction ID" value="UER00275"/>
</dbReference>
<dbReference type="Proteomes" id="UP000002439">
    <property type="component" value="Chromosome"/>
</dbReference>
<dbReference type="GO" id="GO:0005737">
    <property type="term" value="C:cytoplasm"/>
    <property type="evidence" value="ECO:0007669"/>
    <property type="project" value="UniProtKB-SubCell"/>
</dbReference>
<dbReference type="GO" id="GO:0005524">
    <property type="term" value="F:ATP binding"/>
    <property type="evidence" value="ECO:0007669"/>
    <property type="project" value="UniProtKB-KW"/>
</dbReference>
<dbReference type="GO" id="GO:0033862">
    <property type="term" value="F:UMP kinase activity"/>
    <property type="evidence" value="ECO:0000318"/>
    <property type="project" value="GO_Central"/>
</dbReference>
<dbReference type="GO" id="GO:0044210">
    <property type="term" value="P:'de novo' CTP biosynthetic process"/>
    <property type="evidence" value="ECO:0007669"/>
    <property type="project" value="UniProtKB-UniRule"/>
</dbReference>
<dbReference type="GO" id="GO:0006225">
    <property type="term" value="P:UDP biosynthetic process"/>
    <property type="evidence" value="ECO:0000318"/>
    <property type="project" value="GO_Central"/>
</dbReference>
<dbReference type="CDD" id="cd04253">
    <property type="entry name" value="AAK_UMPK-PyrH-Pf"/>
    <property type="match status" value="1"/>
</dbReference>
<dbReference type="Gene3D" id="3.40.1160.10">
    <property type="entry name" value="Acetylglutamate kinase-like"/>
    <property type="match status" value="1"/>
</dbReference>
<dbReference type="HAMAP" id="MF_01220_A">
    <property type="entry name" value="PyrH_A"/>
    <property type="match status" value="1"/>
</dbReference>
<dbReference type="InterPro" id="IPR036393">
    <property type="entry name" value="AceGlu_kinase-like_sf"/>
</dbReference>
<dbReference type="InterPro" id="IPR001048">
    <property type="entry name" value="Asp/Glu/Uridylate_kinase"/>
</dbReference>
<dbReference type="InterPro" id="IPR011817">
    <property type="entry name" value="Uridylate_kinase"/>
</dbReference>
<dbReference type="InterPro" id="IPR011818">
    <property type="entry name" value="Uridylate_kinase_arch/spir"/>
</dbReference>
<dbReference type="NCBIfam" id="TIGR02076">
    <property type="entry name" value="pyrH_arch"/>
    <property type="match status" value="1"/>
</dbReference>
<dbReference type="PANTHER" id="PTHR42833">
    <property type="entry name" value="URIDYLATE KINASE"/>
    <property type="match status" value="1"/>
</dbReference>
<dbReference type="PANTHER" id="PTHR42833:SF4">
    <property type="entry name" value="URIDYLATE KINASE PUMPKIN, CHLOROPLASTIC"/>
    <property type="match status" value="1"/>
</dbReference>
<dbReference type="Pfam" id="PF00696">
    <property type="entry name" value="AA_kinase"/>
    <property type="match status" value="1"/>
</dbReference>
<dbReference type="PIRSF" id="PIRSF005650">
    <property type="entry name" value="Uridylate_kin"/>
    <property type="match status" value="1"/>
</dbReference>
<dbReference type="SUPFAM" id="SSF53633">
    <property type="entry name" value="Carbamate kinase-like"/>
    <property type="match status" value="1"/>
</dbReference>
<name>PYRH_PYRAE</name>
<proteinExistence type="inferred from homology"/>
<reference key="1">
    <citation type="journal article" date="2002" name="Proc. Natl. Acad. Sci. U.S.A.">
        <title>Genome sequence of the hyperthermophilic crenarchaeon Pyrobaculum aerophilum.</title>
        <authorList>
            <person name="Fitz-Gibbon S.T."/>
            <person name="Ladner H."/>
            <person name="Kim U.-J."/>
            <person name="Stetter K.O."/>
            <person name="Simon M.I."/>
            <person name="Miller J.H."/>
        </authorList>
    </citation>
    <scope>NUCLEOTIDE SEQUENCE [LARGE SCALE GENOMIC DNA]</scope>
    <source>
        <strain>ATCC 51768 / DSM 7523 / JCM 9630 / CIP 104966 / NBRC 100827 / IM2</strain>
    </source>
</reference>
<keyword id="KW-0067">ATP-binding</keyword>
<keyword id="KW-0963">Cytoplasm</keyword>
<keyword id="KW-0418">Kinase</keyword>
<keyword id="KW-0547">Nucleotide-binding</keyword>
<keyword id="KW-0665">Pyrimidine biosynthesis</keyword>
<keyword id="KW-1185">Reference proteome</keyword>
<keyword id="KW-0808">Transferase</keyword>
<sequence length="217" mass="23542">MALVIKLSGRVFEDEELVFKYAGVIRNLSGKVAVVTGGGEVARRYIAIAKRGGASNTFQDLLGIYASRLNALLLISLLKDAYPRVPANIEEFLEAWSGHRIVVTGGFQPGQSTATVAALVAEAVGASALLNAANIDAVYSDDPRRNPNAQRLRELKYDEFEKIIRSSSLPGGYELMDVWSISILKRNCITTYVFDGRRPDHVVAAARGENPGSKITC</sequence>
<accession>Q8ZTP3</accession>